<name>ILVA_SALTY</name>
<keyword id="KW-0021">Allosteric enzyme</keyword>
<keyword id="KW-0028">Amino-acid biosynthesis</keyword>
<keyword id="KW-0100">Branched-chain amino acid biosynthesis</keyword>
<keyword id="KW-0412">Isoleucine biosynthesis</keyword>
<keyword id="KW-0456">Lyase</keyword>
<keyword id="KW-0663">Pyridoxal phosphate</keyword>
<keyword id="KW-1185">Reference proteome</keyword>
<keyword id="KW-0677">Repeat</keyword>
<proteinExistence type="inferred from homology"/>
<organism>
    <name type="scientific">Salmonella typhimurium (strain LT2 / SGSC1412 / ATCC 700720)</name>
    <dbReference type="NCBI Taxonomy" id="99287"/>
    <lineage>
        <taxon>Bacteria</taxon>
        <taxon>Pseudomonadati</taxon>
        <taxon>Pseudomonadota</taxon>
        <taxon>Gammaproteobacteria</taxon>
        <taxon>Enterobacterales</taxon>
        <taxon>Enterobacteriaceae</taxon>
        <taxon>Salmonella</taxon>
    </lineage>
</organism>
<sequence length="514" mass="56253">MAESQPLSVAPEGAEYLRAVLRAPVYEAAQVTPLQKMEKLSSRLDNVILVKREDRQPVHSFKLRGAYAMMAGLTEEQKAHGVITASAGNHAQGVAFSSARLGVKSLIVMPKATADIKVDAVRGFGGEVLLHGANFDEAKAKAIELAQQQGFTWVPPFDHPMVIAGQGTLALELLQQDSHLDRVFVPVGGGGLAAGVAVLIKQLMPQIKVIAVEAEDSACLKAALEAGHPVDLPRVGLFAEGVAVKRIGDETFRLCQEYLDDIITVDSDAICAAMKDLFEDVRAVAEPSGALALAGMKKYIAQHNIRGERLAHVLSGANVNFHGLRYVSERCELGEQREALLAVTIPEEKGSFLKFCQLLGGRMVTEFNYRFADAKNACIFVGVRVSQGLEERKEIITQLCDGGYSVVDLSDDEMAKLHVRYMVGGRPSKPLQERLYSFEFPESPGALLKFLHTLGTHWNISLFHYRSHGTDYGRVLAAFELGDHEPDFETRLHELGYECHDESNNPAFRFFLAG</sequence>
<dbReference type="EC" id="4.3.1.19"/>
<dbReference type="EMBL" id="M26670">
    <property type="protein sequence ID" value="AAA27150.1"/>
    <property type="molecule type" value="Genomic_DNA"/>
</dbReference>
<dbReference type="EMBL" id="AF233324">
    <property type="protein sequence ID" value="AAF33479.1"/>
    <property type="molecule type" value="Genomic_DNA"/>
</dbReference>
<dbReference type="EMBL" id="AE006468">
    <property type="protein sequence ID" value="AAL22755.1"/>
    <property type="molecule type" value="Genomic_DNA"/>
</dbReference>
<dbReference type="EMBL" id="M25498">
    <property type="protein sequence ID" value="AAA27151.1"/>
    <property type="molecule type" value="Genomic_DNA"/>
</dbReference>
<dbReference type="PIR" id="JT0278">
    <property type="entry name" value="DWEBTT"/>
</dbReference>
<dbReference type="RefSeq" id="NP_462796.1">
    <property type="nucleotide sequence ID" value="NC_003197.2"/>
</dbReference>
<dbReference type="RefSeq" id="WP_001518457.1">
    <property type="nucleotide sequence ID" value="NC_003197.2"/>
</dbReference>
<dbReference type="SMR" id="P20506"/>
<dbReference type="STRING" id="99287.STM3905"/>
<dbReference type="PaxDb" id="99287-STM3905"/>
<dbReference type="GeneID" id="1255431"/>
<dbReference type="KEGG" id="stm:STM3905"/>
<dbReference type="PATRIC" id="fig|99287.12.peg.4127"/>
<dbReference type="HOGENOM" id="CLU_021152_6_1_6"/>
<dbReference type="OMA" id="TRFEYTK"/>
<dbReference type="PhylomeDB" id="P20506"/>
<dbReference type="BioCyc" id="SENT99287:STM3905-MONOMER"/>
<dbReference type="UniPathway" id="UPA00047">
    <property type="reaction ID" value="UER00054"/>
</dbReference>
<dbReference type="Proteomes" id="UP000001014">
    <property type="component" value="Chromosome"/>
</dbReference>
<dbReference type="GO" id="GO:0030170">
    <property type="term" value="F:pyridoxal phosphate binding"/>
    <property type="evidence" value="ECO:0007669"/>
    <property type="project" value="InterPro"/>
</dbReference>
<dbReference type="GO" id="GO:0004794">
    <property type="term" value="F:threonine deaminase activity"/>
    <property type="evidence" value="ECO:0000318"/>
    <property type="project" value="GO_Central"/>
</dbReference>
<dbReference type="GO" id="GO:0009097">
    <property type="term" value="P:isoleucine biosynthetic process"/>
    <property type="evidence" value="ECO:0000318"/>
    <property type="project" value="GO_Central"/>
</dbReference>
<dbReference type="GO" id="GO:0006566">
    <property type="term" value="P:threonine metabolic process"/>
    <property type="evidence" value="ECO:0000250"/>
    <property type="project" value="UniProtKB"/>
</dbReference>
<dbReference type="CDD" id="cd04906">
    <property type="entry name" value="ACT_ThrD-I_1"/>
    <property type="match status" value="1"/>
</dbReference>
<dbReference type="CDD" id="cd04907">
    <property type="entry name" value="ACT_ThrD-I_2"/>
    <property type="match status" value="1"/>
</dbReference>
<dbReference type="CDD" id="cd01562">
    <property type="entry name" value="Thr-dehyd"/>
    <property type="match status" value="1"/>
</dbReference>
<dbReference type="FunFam" id="3.40.1020.10:FF:000001">
    <property type="entry name" value="L-threonine dehydratase"/>
    <property type="match status" value="1"/>
</dbReference>
<dbReference type="FunFam" id="3.40.50.1100:FF:000008">
    <property type="entry name" value="L-threonine dehydratase"/>
    <property type="match status" value="1"/>
</dbReference>
<dbReference type="Gene3D" id="3.40.50.1100">
    <property type="match status" value="2"/>
</dbReference>
<dbReference type="Gene3D" id="3.40.1020.10">
    <property type="entry name" value="Biosynthetic Threonine Deaminase, Domain 3"/>
    <property type="match status" value="1"/>
</dbReference>
<dbReference type="InterPro" id="IPR045865">
    <property type="entry name" value="ACT-like_dom_sf"/>
</dbReference>
<dbReference type="InterPro" id="IPR050147">
    <property type="entry name" value="Ser/Thr_Dehydratase"/>
</dbReference>
<dbReference type="InterPro" id="IPR000634">
    <property type="entry name" value="Ser/Thr_deHydtase_PyrdxlP-BS"/>
</dbReference>
<dbReference type="InterPro" id="IPR001721">
    <property type="entry name" value="TD_ACT-like"/>
</dbReference>
<dbReference type="InterPro" id="IPR038110">
    <property type="entry name" value="TD_ACT-like_sf"/>
</dbReference>
<dbReference type="InterPro" id="IPR005787">
    <property type="entry name" value="Thr_deHydtase_biosynth"/>
</dbReference>
<dbReference type="InterPro" id="IPR001926">
    <property type="entry name" value="TrpB-like_PALP"/>
</dbReference>
<dbReference type="InterPro" id="IPR036052">
    <property type="entry name" value="TrpB-like_PALP_sf"/>
</dbReference>
<dbReference type="NCBIfam" id="TIGR01124">
    <property type="entry name" value="ilvA_2Cterm"/>
    <property type="match status" value="1"/>
</dbReference>
<dbReference type="NCBIfam" id="NF006674">
    <property type="entry name" value="PRK09224.1"/>
    <property type="match status" value="1"/>
</dbReference>
<dbReference type="PANTHER" id="PTHR48078:SF11">
    <property type="entry name" value="THREONINE DEHYDRATASE, MITOCHONDRIAL"/>
    <property type="match status" value="1"/>
</dbReference>
<dbReference type="PANTHER" id="PTHR48078">
    <property type="entry name" value="THREONINE DEHYDRATASE, MITOCHONDRIAL-RELATED"/>
    <property type="match status" value="1"/>
</dbReference>
<dbReference type="Pfam" id="PF00291">
    <property type="entry name" value="PALP"/>
    <property type="match status" value="1"/>
</dbReference>
<dbReference type="Pfam" id="PF00585">
    <property type="entry name" value="Thr_dehydrat_C"/>
    <property type="match status" value="2"/>
</dbReference>
<dbReference type="SUPFAM" id="SSF55021">
    <property type="entry name" value="ACT-like"/>
    <property type="match status" value="2"/>
</dbReference>
<dbReference type="SUPFAM" id="SSF53686">
    <property type="entry name" value="Tryptophan synthase beta subunit-like PLP-dependent enzymes"/>
    <property type="match status" value="1"/>
</dbReference>
<dbReference type="PROSITE" id="PS51672">
    <property type="entry name" value="ACT_LIKE"/>
    <property type="match status" value="2"/>
</dbReference>
<dbReference type="PROSITE" id="PS00165">
    <property type="entry name" value="DEHYDRATASE_SER_THR"/>
    <property type="match status" value="1"/>
</dbReference>
<feature type="chain" id="PRO_0000185580" description="L-Threonine dehydratase biosynthetic IlvA">
    <location>
        <begin position="1"/>
        <end position="514"/>
    </location>
</feature>
<feature type="domain" description="ACT-like 1" evidence="2">
    <location>
        <begin position="339"/>
        <end position="411"/>
    </location>
</feature>
<feature type="domain" description="ACT-like 2" evidence="2">
    <location>
        <begin position="434"/>
        <end position="504"/>
    </location>
</feature>
<feature type="binding site" evidence="1">
    <location>
        <position position="89"/>
    </location>
    <ligand>
        <name>pyridoxal 5'-phosphate</name>
        <dbReference type="ChEBI" id="CHEBI:597326"/>
    </ligand>
</feature>
<feature type="binding site" evidence="1">
    <location>
        <begin position="188"/>
        <end position="192"/>
    </location>
    <ligand>
        <name>pyridoxal 5'-phosphate</name>
        <dbReference type="ChEBI" id="CHEBI:597326"/>
    </ligand>
</feature>
<feature type="binding site" evidence="1">
    <location>
        <position position="315"/>
    </location>
    <ligand>
        <name>pyridoxal 5'-phosphate</name>
        <dbReference type="ChEBI" id="CHEBI:597326"/>
    </ligand>
</feature>
<feature type="modified residue" description="N6-(pyridoxal phosphate)lysine" evidence="1">
    <location>
        <position position="62"/>
    </location>
</feature>
<feature type="sequence conflict" description="In Ref. 1; AAA27150." evidence="3" ref="1">
    <original>A</original>
    <variation>T</variation>
    <location>
        <position position="71"/>
    </location>
</feature>
<feature type="sequence conflict" description="In Ref. 1; AAA27150." evidence="3" ref="1">
    <original>F</original>
    <variation>L</variation>
    <location>
        <position position="124"/>
    </location>
</feature>
<feature type="sequence conflict" description="In Ref. 1; AAA27150." evidence="3" ref="1">
    <original>A</original>
    <variation>G</variation>
    <location>
        <position position="339"/>
    </location>
</feature>
<feature type="sequence conflict" description="In Ref. 1; AAA27150." evidence="3" ref="1">
    <original>A</original>
    <variation>T</variation>
    <location>
        <position position="342"/>
    </location>
</feature>
<feature type="sequence conflict" description="In Ref. 1; AAA27150." evidence="3" ref="1">
    <original>SFL</original>
    <variation>NFP</variation>
    <location>
        <begin position="351"/>
        <end position="353"/>
    </location>
</feature>
<comment type="function">
    <text evidence="1">Catalyzes the anaerobic formation of alpha-ketobutyrate and ammonia from threonine in a two-step reaction. The first step involved a dehydration of threonine and a production of enamine intermediates (aminocrotonate), which tautomerizes to its imine form (iminobutyrate). Both intermediates are unstable and short-lived. The second step is the nonenzymatic hydrolysis of the enamine/imine intermediates to form 2-ketobutyrate and free ammonia. In the low water environment of the cell, the second step is accelerated by RidA (By similarity).</text>
</comment>
<comment type="catalytic activity">
    <reaction>
        <text>L-threonine = 2-oxobutanoate + NH4(+)</text>
        <dbReference type="Rhea" id="RHEA:22108"/>
        <dbReference type="ChEBI" id="CHEBI:16763"/>
        <dbReference type="ChEBI" id="CHEBI:28938"/>
        <dbReference type="ChEBI" id="CHEBI:57926"/>
        <dbReference type="EC" id="4.3.1.19"/>
    </reaction>
</comment>
<comment type="cofactor">
    <cofactor evidence="1">
        <name>pyridoxal 5'-phosphate</name>
        <dbReference type="ChEBI" id="CHEBI:597326"/>
    </cofactor>
</comment>
<comment type="activity regulation">
    <text evidence="1">Isoleucine allosterically inhibits whereas valine allosterically activates this enzyme.</text>
</comment>
<comment type="pathway">
    <text>Amino-acid biosynthesis; L-isoleucine biosynthesis; 2-oxobutanoate from L-threonine: step 1/1.</text>
</comment>
<comment type="subunit">
    <text evidence="1">Homotetramer.</text>
</comment>
<comment type="similarity">
    <text evidence="3">Belongs to the serine/threonine dehydratase family.</text>
</comment>
<accession>P20506</accession>
<accession>Q9L6S8</accession>
<protein>
    <recommendedName>
        <fullName>L-Threonine dehydratase biosynthetic IlvA</fullName>
        <ecNumber>4.3.1.19</ecNumber>
    </recommendedName>
    <alternativeName>
        <fullName>Threonine deaminase</fullName>
    </alternativeName>
</protein>
<reference key="1">
    <citation type="journal article" date="1988" name="Gene">
        <title>Analysis of the functional domains of biosynthetic threonine deaminase by comparison of the amino acid sequences of three wild-type alleles to the amino acid sequence of biodegradative threonine deaminase.</title>
        <authorList>
            <person name="Taillon B.E."/>
            <person name="Little R."/>
            <person name="Lawther R.P."/>
        </authorList>
    </citation>
    <scope>NUCLEOTIDE SEQUENCE [GENOMIC DNA]</scope>
</reference>
<reference key="2">
    <citation type="journal article" date="2001" name="Nature">
        <title>Complete genome sequence of Salmonella enterica serovar Typhimurium LT2.</title>
        <authorList>
            <person name="McClelland M."/>
            <person name="Sanderson K.E."/>
            <person name="Spieth J."/>
            <person name="Clifton S.W."/>
            <person name="Latreille P."/>
            <person name="Courtney L."/>
            <person name="Porwollik S."/>
            <person name="Ali J."/>
            <person name="Dante M."/>
            <person name="Du F."/>
            <person name="Hou S."/>
            <person name="Layman D."/>
            <person name="Leonard S."/>
            <person name="Nguyen C."/>
            <person name="Scott K."/>
            <person name="Holmes A."/>
            <person name="Grewal N."/>
            <person name="Mulvaney E."/>
            <person name="Ryan E."/>
            <person name="Sun H."/>
            <person name="Florea L."/>
            <person name="Miller W."/>
            <person name="Stoneking T."/>
            <person name="Nhan M."/>
            <person name="Waterston R."/>
            <person name="Wilson R.K."/>
        </authorList>
    </citation>
    <scope>NUCLEOTIDE SEQUENCE [LARGE SCALE GENOMIC DNA]</scope>
    <source>
        <strain>LT2 / SGSC1412 / ATCC 700720</strain>
    </source>
</reference>
<reference key="3">
    <citation type="journal article" date="1989" name="Gene">
        <title>Physical identification of an internal promoter, ilvAp, in the distal portion of the ilvGMEDA operon.</title>
        <authorList>
            <person name="Lopes J.M."/>
            <person name="Lawther R.P."/>
        </authorList>
    </citation>
    <scope>NUCLEOTIDE SEQUENCE [GENOMIC DNA] OF 1-10</scope>
    <source>
        <strain>LT2</strain>
    </source>
</reference>
<evidence type="ECO:0000250" key="1"/>
<evidence type="ECO:0000255" key="2">
    <source>
        <dbReference type="PROSITE-ProRule" id="PRU01008"/>
    </source>
</evidence>
<evidence type="ECO:0000305" key="3"/>
<gene>
    <name type="primary">ilvA</name>
    <name type="ordered locus">STM3905</name>
    <name type="ORF">STMD1.87</name>
</gene>